<feature type="chain" id="PRO_0000451414" description="G-protein coupled receptor dmsr-1">
    <location>
        <begin position="1"/>
        <end position="510"/>
    </location>
</feature>
<feature type="topological domain" description="Extracellular" evidence="7">
    <location>
        <begin position="1"/>
        <end position="35"/>
    </location>
</feature>
<feature type="transmembrane region" description="Helical; Name=1" evidence="1">
    <location>
        <begin position="36"/>
        <end position="56"/>
    </location>
</feature>
<feature type="topological domain" description="Cytoplasmic" evidence="7">
    <location>
        <begin position="57"/>
        <end position="64"/>
    </location>
</feature>
<feature type="transmembrane region" description="Helical; Name=2" evidence="1">
    <location>
        <begin position="65"/>
        <end position="85"/>
    </location>
</feature>
<feature type="topological domain" description="Extracellular" evidence="7">
    <location>
        <begin position="86"/>
        <end position="107"/>
    </location>
</feature>
<feature type="transmembrane region" description="Helical; Name=3" evidence="1">
    <location>
        <begin position="108"/>
        <end position="128"/>
    </location>
</feature>
<feature type="topological domain" description="Cytoplasmic" evidence="7">
    <location>
        <begin position="129"/>
        <end position="155"/>
    </location>
</feature>
<feature type="transmembrane region" description="Helical; Name=4" evidence="1">
    <location>
        <begin position="156"/>
        <end position="176"/>
    </location>
</feature>
<feature type="topological domain" description="Extracellular" evidence="7">
    <location>
        <begin position="177"/>
        <end position="223"/>
    </location>
</feature>
<feature type="transmembrane region" description="Helical; Name=5" evidence="1">
    <location>
        <begin position="224"/>
        <end position="244"/>
    </location>
</feature>
<feature type="topological domain" description="Cytoplasmic" evidence="7">
    <location>
        <begin position="245"/>
        <end position="307"/>
    </location>
</feature>
<feature type="transmembrane region" description="Helical; Name=6" evidence="1">
    <location>
        <begin position="308"/>
        <end position="328"/>
    </location>
</feature>
<feature type="topological domain" description="Extracellular" evidence="7">
    <location>
        <begin position="329"/>
        <end position="343"/>
    </location>
</feature>
<feature type="transmembrane region" description="Helical; Name=7" evidence="1">
    <location>
        <begin position="344"/>
        <end position="364"/>
    </location>
</feature>
<feature type="topological domain" description="Cytoplasmic" evidence="7">
    <location>
        <begin position="365"/>
        <end position="510"/>
    </location>
</feature>
<feature type="region of interest" description="Disordered" evidence="4">
    <location>
        <begin position="452"/>
        <end position="510"/>
    </location>
</feature>
<feature type="compositionally biased region" description="Polar residues" evidence="4">
    <location>
        <begin position="487"/>
        <end position="499"/>
    </location>
</feature>
<feature type="glycosylation site" description="N-linked (GlcNAc...) asparagine" evidence="2">
    <location>
        <position position="186"/>
    </location>
</feature>
<feature type="splice variant" id="VSP_060778" description="In isoform b." evidence="7">
    <original>SASVKMVGIQVR</original>
    <variation>WSESRYEETVRK</variation>
    <location>
        <begin position="430"/>
        <end position="441"/>
    </location>
</feature>
<feature type="splice variant" id="VSP_060779" description="In isoform b." evidence="7">
    <location>
        <begin position="442"/>
        <end position="510"/>
    </location>
</feature>
<feature type="mutagenesis site" description="In qn53; defective sleep induction following heat stress in a flp-13 overexpressing mutant background." evidence="5">
    <location>
        <begin position="107"/>
        <end position="510"/>
    </location>
</feature>
<feature type="mutagenesis site" description="In qn52; defective sleep induction following heat stress in a flp-13 overexpressing mutant background." evidence="5">
    <original>A</original>
    <variation>V</variation>
    <location>
        <position position="207"/>
    </location>
</feature>
<feature type="mutagenesis site" description="In qn40; defective sleep induction following heat stress in a flp-13 overexpressing mutant background." evidence="5">
    <location>
        <begin position="246"/>
        <end position="510"/>
    </location>
</feature>
<feature type="mutagenesis site" description="In qn51; defective sleep induction following heat stress in a flp-13 overexpressing mutant background." evidence="5">
    <location>
        <begin position="322"/>
        <end position="510"/>
    </location>
</feature>
<feature type="mutagenesis site" description="In qn44; defective sleep induction following heat stress in a flp-13 overexpressing mutant background." evidence="5">
    <location>
        <begin position="337"/>
        <end position="510"/>
    </location>
</feature>
<feature type="mutagenesis site" description="In qn49; defective sleep induction following heat stress in a flp-13 overexpressing mutant background." evidence="5">
    <location>
        <begin position="345"/>
        <end position="510"/>
    </location>
</feature>
<dbReference type="EMBL" id="BX284605">
    <property type="protein sequence ID" value="CAA98492.1"/>
    <property type="molecule type" value="Genomic_DNA"/>
</dbReference>
<dbReference type="EMBL" id="BX284605">
    <property type="protein sequence ID" value="CAD36492.1"/>
    <property type="molecule type" value="Genomic_DNA"/>
</dbReference>
<dbReference type="PIR" id="T22835">
    <property type="entry name" value="T22835"/>
</dbReference>
<dbReference type="RefSeq" id="NP_741629.1">
    <molecule id="Q20929-1"/>
    <property type="nucleotide sequence ID" value="NM_171541.7"/>
</dbReference>
<dbReference type="RefSeq" id="NP_741630.1">
    <molecule id="Q20929-2"/>
    <property type="nucleotide sequence ID" value="NM_171542.7"/>
</dbReference>
<dbReference type="SMR" id="Q20929"/>
<dbReference type="FunCoup" id="Q20929">
    <property type="interactions" value="1"/>
</dbReference>
<dbReference type="STRING" id="6239.F57B7.1a.1"/>
<dbReference type="GlyCosmos" id="Q20929">
    <property type="glycosylation" value="1 site, No reported glycans"/>
</dbReference>
<dbReference type="PaxDb" id="6239-F57B7.1a"/>
<dbReference type="EnsemblMetazoa" id="F57B7.1a.1">
    <molecule id="Q20929-1"/>
    <property type="protein sequence ID" value="F57B7.1a.1"/>
    <property type="gene ID" value="WBGene00010191"/>
</dbReference>
<dbReference type="EnsemblMetazoa" id="F57B7.1b.1">
    <molecule id="Q20929-2"/>
    <property type="protein sequence ID" value="F57B7.1b.1"/>
    <property type="gene ID" value="WBGene00010191"/>
</dbReference>
<dbReference type="GeneID" id="186437"/>
<dbReference type="KEGG" id="cel:CELE_F57B7.1"/>
<dbReference type="UCSC" id="F57B7.1a">
    <property type="organism name" value="c. elegans"/>
</dbReference>
<dbReference type="AGR" id="WB:WBGene00010191"/>
<dbReference type="CTD" id="186437"/>
<dbReference type="WormBase" id="F57B7.1a">
    <molecule id="Q20929-1"/>
    <property type="protein sequence ID" value="CE05989"/>
    <property type="gene ID" value="WBGene00010191"/>
    <property type="gene designation" value="dmsr-1"/>
</dbReference>
<dbReference type="WormBase" id="F57B7.1b">
    <molecule id="Q20929-2"/>
    <property type="protein sequence ID" value="CE31009"/>
    <property type="gene ID" value="WBGene00010191"/>
    <property type="gene designation" value="dmsr-1"/>
</dbReference>
<dbReference type="eggNOG" id="ENOG502RECK">
    <property type="taxonomic scope" value="Eukaryota"/>
</dbReference>
<dbReference type="GeneTree" id="ENSGT00940000166133"/>
<dbReference type="HOGENOM" id="CLU_009579_24_4_1"/>
<dbReference type="InParanoid" id="Q20929"/>
<dbReference type="OMA" id="KLSYGWA"/>
<dbReference type="OrthoDB" id="5864054at2759"/>
<dbReference type="PhylomeDB" id="Q20929"/>
<dbReference type="PRO" id="PR:Q20929"/>
<dbReference type="Proteomes" id="UP000001940">
    <property type="component" value="Chromosome V"/>
</dbReference>
<dbReference type="Bgee" id="WBGene00010191">
    <property type="expression patterns" value="Expressed in larva and 3 other cell types or tissues"/>
</dbReference>
<dbReference type="ExpressionAtlas" id="Q20929">
    <property type="expression patterns" value="baseline and differential"/>
</dbReference>
<dbReference type="GO" id="GO:0032809">
    <property type="term" value="C:neuronal cell body membrane"/>
    <property type="evidence" value="ECO:0000314"/>
    <property type="project" value="UniProtKB"/>
</dbReference>
<dbReference type="GO" id="GO:0005886">
    <property type="term" value="C:plasma membrane"/>
    <property type="evidence" value="ECO:0000318"/>
    <property type="project" value="GO_Central"/>
</dbReference>
<dbReference type="GO" id="GO:0008528">
    <property type="term" value="F:G protein-coupled peptide receptor activity"/>
    <property type="evidence" value="ECO:0000318"/>
    <property type="project" value="GO_Central"/>
</dbReference>
<dbReference type="GO" id="GO:0008188">
    <property type="term" value="F:neuropeptide receptor activity"/>
    <property type="evidence" value="ECO:0000314"/>
    <property type="project" value="UniProtKB"/>
</dbReference>
<dbReference type="GO" id="GO:0007186">
    <property type="term" value="P:G protein-coupled receptor signaling pathway"/>
    <property type="evidence" value="ECO:0000318"/>
    <property type="project" value="GO_Central"/>
</dbReference>
<dbReference type="GO" id="GO:1900034">
    <property type="term" value="P:regulation of cellular response to heat"/>
    <property type="evidence" value="ECO:0000316"/>
    <property type="project" value="UniProtKB"/>
</dbReference>
<dbReference type="GO" id="GO:0045187">
    <property type="term" value="P:regulation of circadian sleep/wake cycle, sleep"/>
    <property type="evidence" value="ECO:0000315"/>
    <property type="project" value="UniProtKB"/>
</dbReference>
<dbReference type="CDD" id="cd14978">
    <property type="entry name" value="7tmA_FMRFamide_R-like"/>
    <property type="match status" value="1"/>
</dbReference>
<dbReference type="Gene3D" id="1.20.1070.10">
    <property type="entry name" value="Rhodopsin 7-helix transmembrane proteins"/>
    <property type="match status" value="1"/>
</dbReference>
<dbReference type="InterPro" id="IPR019427">
    <property type="entry name" value="7TM_GPCR_serpentine_rcpt_Srw"/>
</dbReference>
<dbReference type="InterPro" id="IPR053219">
    <property type="entry name" value="GPCR_1"/>
</dbReference>
<dbReference type="InterPro" id="IPR000276">
    <property type="entry name" value="GPCR_Rhodpsn"/>
</dbReference>
<dbReference type="InterPro" id="IPR017452">
    <property type="entry name" value="GPCR_Rhodpsn_7TM"/>
</dbReference>
<dbReference type="PANTHER" id="PTHR46273:SF14">
    <property type="entry name" value="G-PROTEIN COUPLED RECEPTOR DMSR-1"/>
    <property type="match status" value="1"/>
</dbReference>
<dbReference type="PANTHER" id="PTHR46273">
    <property type="entry name" value="MYOSUPPRESSIN RECEPTOR 1, ISOFORM B-RELATED"/>
    <property type="match status" value="1"/>
</dbReference>
<dbReference type="Pfam" id="PF10324">
    <property type="entry name" value="7TM_GPCR_Srw"/>
    <property type="match status" value="2"/>
</dbReference>
<dbReference type="PRINTS" id="PR00237">
    <property type="entry name" value="GPCRRHODOPSN"/>
</dbReference>
<dbReference type="SMART" id="SM01381">
    <property type="entry name" value="7TM_GPCR_Srsx"/>
    <property type="match status" value="1"/>
</dbReference>
<dbReference type="SUPFAM" id="SSF81321">
    <property type="entry name" value="Family A G protein-coupled receptor-like"/>
    <property type="match status" value="1"/>
</dbReference>
<dbReference type="PROSITE" id="PS50262">
    <property type="entry name" value="G_PROTEIN_RECEP_F1_2"/>
    <property type="match status" value="1"/>
</dbReference>
<sequence length="510" mass="57249">MEFTECKTTFIHLPDKSFLYDVFVSVYNFYHPIHAYLSIFLCVLGTIANFCNIVVLTRRTMRTPVNMILTAMASCDTVVLFSNLIYTTHYSFVAFKFCHPKHWSYSWALFLIAHAHLSLVAHSSSVWLSVMLALVRYVTLRSRGNMGGMQVTLRHSYYAVAVTVSLVAVLNAPNFLNYKINEQPLNETCTDLDPMFWNSPAYLPGIADIAKANSCLVFRLSYWISGMVFKVLPCALLSLFVWLLLRILREVRENRQRLLKNSQHRPPNQTTTRNGQRLSISVAGNEKLGRNGSLRGRGERVDRTTHMLLAIVAVMLVTELPQGIMAVLSGMCSEEFRIYIYNNLGDILDLFSLCGSCCSFIIYCSMSGQFRNEFHRVFVPAKVRCLRMSSPSIRRPSDAYSTTKMTFLKPNEKNGNGMNGNGTYSEDTRSASVKMVGIQVRRNSTEITRMTGCDSITPCSPMPTSFPSSPLPPIRSGEDESTDETSHLLNSSGPNSTASADGIRGHFQNI</sequence>
<gene>
    <name evidence="6 10" type="primary">dmsr-1</name>
    <name evidence="10" type="ORF">F57B7.1</name>
</gene>
<keyword id="KW-0025">Alternative splicing</keyword>
<keyword id="KW-1003">Cell membrane</keyword>
<keyword id="KW-0297">G-protein coupled receptor</keyword>
<keyword id="KW-0325">Glycoprotein</keyword>
<keyword id="KW-0472">Membrane</keyword>
<keyword id="KW-0675">Receptor</keyword>
<keyword id="KW-1185">Reference proteome</keyword>
<keyword id="KW-0807">Transducer</keyword>
<keyword id="KW-0812">Transmembrane</keyword>
<keyword id="KW-1133">Transmembrane helix</keyword>
<reference evidence="9" key="1">
    <citation type="journal article" date="1998" name="Science">
        <title>Genome sequence of the nematode C. elegans: a platform for investigating biology.</title>
        <authorList>
            <consortium name="The C. elegans sequencing consortium"/>
        </authorList>
    </citation>
    <scope>NUCLEOTIDE SEQUENCE [LARGE SCALE GENOMIC DNA]</scope>
    <source>
        <strain evidence="9">Bristol N2</strain>
    </source>
</reference>
<reference evidence="7" key="2">
    <citation type="journal article" date="2017" name="Elife">
        <title>The RFamide receptor DMSR-1 regulates stress-induced sleep in C. elegans.</title>
        <authorList>
            <person name="Iannacone M.J."/>
            <person name="Beets I."/>
            <person name="Lopes L.E."/>
            <person name="Churgin M.A."/>
            <person name="Fang-Yen C."/>
            <person name="Nelson M.D."/>
            <person name="Schoofs L."/>
            <person name="Raizen D.M."/>
        </authorList>
    </citation>
    <scope>FUNCTION (ISOFORM A)</scope>
    <scope>SUBCELLULAR LOCATION</scope>
    <scope>TISSUE SPECIFICITY</scope>
    <scope>MUTAGENESIS OF 107-TRP--ILE-510; ALA-207; 246-ARG--ILE-510; 322-GLN--ILE-510; 337-ARG--ILE-510 AND 345-GLY--ILE-510</scope>
</reference>
<organism evidence="9">
    <name type="scientific">Caenorhabditis elegans</name>
    <dbReference type="NCBI Taxonomy" id="6239"/>
    <lineage>
        <taxon>Eukaryota</taxon>
        <taxon>Metazoa</taxon>
        <taxon>Ecdysozoa</taxon>
        <taxon>Nematoda</taxon>
        <taxon>Chromadorea</taxon>
        <taxon>Rhabditida</taxon>
        <taxon>Rhabditina</taxon>
        <taxon>Rhabditomorpha</taxon>
        <taxon>Rhabditoidea</taxon>
        <taxon>Rhabditidae</taxon>
        <taxon>Peloderinae</taxon>
        <taxon>Caenorhabditis</taxon>
    </lineage>
</organism>
<evidence type="ECO:0000255" key="1"/>
<evidence type="ECO:0000255" key="2">
    <source>
        <dbReference type="PROSITE-ProRule" id="PRU00498"/>
    </source>
</evidence>
<evidence type="ECO:0000255" key="3">
    <source>
        <dbReference type="PROSITE-ProRule" id="PRU00521"/>
    </source>
</evidence>
<evidence type="ECO:0000256" key="4">
    <source>
        <dbReference type="SAM" id="MobiDB-lite"/>
    </source>
</evidence>
<evidence type="ECO:0000269" key="5">
    <source>
    </source>
</evidence>
<evidence type="ECO:0000303" key="6">
    <source>
    </source>
</evidence>
<evidence type="ECO:0000305" key="7"/>
<evidence type="ECO:0000305" key="8">
    <source>
    </source>
</evidence>
<evidence type="ECO:0000312" key="9">
    <source>
        <dbReference type="Proteomes" id="UP000001940"/>
    </source>
</evidence>
<evidence type="ECO:0000312" key="10">
    <source>
        <dbReference type="WormBase" id="F57B7.1a"/>
    </source>
</evidence>
<evidence type="ECO:0000312" key="11">
    <source>
        <dbReference type="WormBase" id="F57B7.1b"/>
    </source>
</evidence>
<protein>
    <recommendedName>
        <fullName evidence="7">G-protein coupled receptor dmsr-1</fullName>
    </recommendedName>
    <alternativeName>
        <fullName evidence="6">Dromyosuppressin receptor related 1</fullName>
    </alternativeName>
</protein>
<accession>Q20929</accession>
<accession>Q8MQ19</accession>
<proteinExistence type="evidence at protein level"/>
<comment type="function">
    <text evidence="8">G-protein coupled receptor.</text>
</comment>
<comment type="function">
    <molecule>Isoform a</molecule>
    <text evidence="5">G-protein coupled receptor for flp-13 RFamide neuropeptides in vitro (PubMed:28094002). Upon activation by flp-13 RFamide neuropeptides, promotes sleep in response to cellular stress also known as stress-induced sleep (SIS), probably by inhibiting the activity of wake-promoting neurons (PubMed:28094002).</text>
</comment>
<comment type="subcellular location">
    <subcellularLocation>
        <location evidence="5">Cell membrane</location>
        <topology evidence="1">Multi-pass membrane protein</topology>
    </subcellularLocation>
</comment>
<comment type="alternative products">
    <event type="alternative splicing"/>
    <isoform>
        <id>Q20929-1</id>
        <name evidence="10">a</name>
        <sequence type="displayed"/>
    </isoform>
    <isoform>
        <id>Q20929-2</id>
        <name evidence="11">b</name>
        <sequence type="described" ref="VSP_060778 VSP_060779"/>
    </isoform>
</comment>
<comment type="tissue specificity">
    <text evidence="5">Expressed in head neurons including the RID neuron and the paired AIY neurons, and in tail neurons including the paired PHA and PHB neurons (PubMed:28094002). Not expressed in AVE and AVA neurons (PubMed:28094002).</text>
</comment>
<comment type="similarity">
    <text evidence="3">Belongs to the G-protein coupled receptor 1 family.</text>
</comment>
<name>DMSR1_CAEEL</name>